<proteinExistence type="evidence at protein level"/>
<keyword id="KW-0002">3D-structure</keyword>
<keyword id="KW-0997">Cell inner membrane</keyword>
<keyword id="KW-1003">Cell membrane</keyword>
<keyword id="KW-0472">Membrane</keyword>
<keyword id="KW-1185">Reference proteome</keyword>
<keyword id="KW-0769">Symport</keyword>
<keyword id="KW-0812">Transmembrane</keyword>
<keyword id="KW-1133">Transmembrane helix</keyword>
<keyword id="KW-0813">Transport</keyword>
<feature type="chain" id="PRO_0000165959" description="Uracil permease">
    <location>
        <begin position="1"/>
        <end position="429"/>
    </location>
</feature>
<feature type="topological domain" description="Cytoplasmic" evidence="1">
    <location>
        <begin position="1"/>
        <end position="13"/>
    </location>
</feature>
<feature type="transmembrane region" description="Helical" evidence="1">
    <location>
        <begin position="14"/>
        <end position="37"/>
    </location>
</feature>
<feature type="topological domain" description="Periplasmic" evidence="1">
    <location>
        <begin position="38"/>
        <end position="41"/>
    </location>
</feature>
<feature type="transmembrane region" description="Helical" evidence="1">
    <location>
        <begin position="42"/>
        <end position="61"/>
    </location>
</feature>
<feature type="topological domain" description="Cytoplasmic" evidence="1">
    <location>
        <begin position="62"/>
        <end position="64"/>
    </location>
</feature>
<feature type="transmembrane region" description="Discontinuously helical" evidence="1">
    <location>
        <begin position="65"/>
        <end position="81"/>
    </location>
</feature>
<feature type="topological domain" description="Periplasmic" evidence="1">
    <location>
        <begin position="82"/>
        <end position="89"/>
    </location>
</feature>
<feature type="transmembrane region" description="Helical" evidence="1">
    <location>
        <begin position="90"/>
        <end position="110"/>
    </location>
</feature>
<feature type="topological domain" description="Cytoplasmic" evidence="1">
    <location>
        <begin position="111"/>
        <end position="122"/>
    </location>
</feature>
<feature type="transmembrane region" description="Helical" evidence="1">
    <location>
        <begin position="123"/>
        <end position="144"/>
    </location>
</feature>
<feature type="topological domain" description="Periplasmic" evidence="1">
    <location>
        <begin position="145"/>
        <end position="155"/>
    </location>
</feature>
<feature type="transmembrane region" description="Helical" evidence="1">
    <location>
        <begin position="156"/>
        <end position="171"/>
    </location>
</feature>
<feature type="topological domain" description="Cytoplasmic" evidence="1">
    <location>
        <begin position="172"/>
        <end position="178"/>
    </location>
</feature>
<feature type="transmembrane region" description="Helical" evidence="1">
    <location>
        <begin position="179"/>
        <end position="199"/>
    </location>
</feature>
<feature type="topological domain" description="Periplasmic" evidence="1">
    <location>
        <begin position="200"/>
        <end position="224"/>
    </location>
</feature>
<feature type="transmembrane region" description="Helical" evidence="1">
    <location>
        <begin position="225"/>
        <end position="248"/>
    </location>
</feature>
<feature type="topological domain" description="Cytoplasmic" evidence="1">
    <location>
        <begin position="249"/>
        <end position="261"/>
    </location>
</feature>
<feature type="transmembrane region" description="Helical" evidence="1">
    <location>
        <begin position="262"/>
        <end position="281"/>
    </location>
</feature>
<feature type="transmembrane region" description="Discontinuously helical" evidence="1">
    <location>
        <begin position="282"/>
        <end position="298"/>
    </location>
</feature>
<feature type="topological domain" description="Cytoplasmic" evidence="1">
    <location>
        <begin position="299"/>
        <end position="301"/>
    </location>
</feature>
<feature type="transmembrane region" description="Helical" evidence="1">
    <location>
        <begin position="302"/>
        <end position="319"/>
    </location>
</feature>
<feature type="topological domain" description="Periplasmic" evidence="1">
    <location>
        <begin position="320"/>
        <end position="332"/>
    </location>
</feature>
<feature type="transmembrane region" description="Helical" evidence="1">
    <location>
        <begin position="333"/>
        <end position="354"/>
    </location>
</feature>
<feature type="topological domain" description="Cytoplasmic" evidence="1">
    <location>
        <begin position="355"/>
        <end position="365"/>
    </location>
</feature>
<feature type="intramembrane region" description="Discontinuously helical" evidence="1">
    <location>
        <begin position="366"/>
        <end position="401"/>
    </location>
</feature>
<feature type="topological domain" description="Cytoplasmic" evidence="1">
    <location>
        <begin position="402"/>
        <end position="429"/>
    </location>
</feature>
<feature type="binding site" evidence="1">
    <location>
        <position position="73"/>
    </location>
    <ligand>
        <name>uracil</name>
        <dbReference type="ChEBI" id="CHEBI:17568"/>
    </ligand>
</feature>
<feature type="binding site" evidence="1">
    <location>
        <position position="241"/>
    </location>
    <ligand>
        <name>uracil</name>
        <dbReference type="ChEBI" id="CHEBI:17568"/>
    </ligand>
</feature>
<feature type="binding site" evidence="1">
    <location>
        <position position="289"/>
    </location>
    <ligand>
        <name>uracil</name>
        <dbReference type="ChEBI" id="CHEBI:17568"/>
    </ligand>
</feature>
<feature type="binding site" evidence="1">
    <location>
        <position position="290"/>
    </location>
    <ligand>
        <name>uracil</name>
        <dbReference type="ChEBI" id="CHEBI:17568"/>
    </ligand>
</feature>
<feature type="helix" evidence="3">
    <location>
        <begin position="14"/>
        <end position="39"/>
    </location>
</feature>
<feature type="helix" evidence="3">
    <location>
        <begin position="43"/>
        <end position="60"/>
    </location>
</feature>
<feature type="turn" evidence="3">
    <location>
        <begin position="61"/>
        <end position="63"/>
    </location>
</feature>
<feature type="strand" evidence="3">
    <location>
        <begin position="69"/>
        <end position="71"/>
    </location>
</feature>
<feature type="helix" evidence="3">
    <location>
        <begin position="73"/>
        <end position="75"/>
    </location>
</feature>
<feature type="helix" evidence="3">
    <location>
        <begin position="76"/>
        <end position="82"/>
    </location>
</feature>
<feature type="helix" evidence="3">
    <location>
        <begin position="83"/>
        <end position="85"/>
    </location>
</feature>
<feature type="helix" evidence="3">
    <location>
        <begin position="88"/>
        <end position="111"/>
    </location>
</feature>
<feature type="helix" evidence="3">
    <location>
        <begin position="116"/>
        <end position="119"/>
    </location>
</feature>
<feature type="helix" evidence="3">
    <location>
        <begin position="122"/>
        <end position="134"/>
    </location>
</feature>
<feature type="helix" evidence="3">
    <location>
        <begin position="137"/>
        <end position="143"/>
    </location>
</feature>
<feature type="helix" evidence="3">
    <location>
        <begin position="156"/>
        <end position="175"/>
    </location>
</feature>
<feature type="helix" evidence="3">
    <location>
        <begin position="180"/>
        <end position="182"/>
    </location>
</feature>
<feature type="helix" evidence="3">
    <location>
        <begin position="184"/>
        <end position="198"/>
    </location>
</feature>
<feature type="helix" evidence="3">
    <location>
        <begin position="205"/>
        <end position="207"/>
    </location>
</feature>
<feature type="helix" evidence="3">
    <location>
        <begin position="225"/>
        <end position="253"/>
    </location>
</feature>
<feature type="helix" evidence="3">
    <location>
        <begin position="258"/>
        <end position="262"/>
    </location>
</feature>
<feature type="helix" evidence="3">
    <location>
        <begin position="263"/>
        <end position="279"/>
    </location>
</feature>
<feature type="strand" evidence="3">
    <location>
        <begin position="285"/>
        <end position="287"/>
    </location>
</feature>
<feature type="helix" evidence="3">
    <location>
        <begin position="289"/>
        <end position="298"/>
    </location>
</feature>
<feature type="helix" evidence="3">
    <location>
        <begin position="303"/>
        <end position="318"/>
    </location>
</feature>
<feature type="helix" evidence="3">
    <location>
        <begin position="320"/>
        <end position="328"/>
    </location>
</feature>
<feature type="helix" evidence="3">
    <location>
        <begin position="331"/>
        <end position="355"/>
    </location>
</feature>
<feature type="helix" evidence="3">
    <location>
        <begin position="363"/>
        <end position="378"/>
    </location>
</feature>
<feature type="strand" evidence="3">
    <location>
        <begin position="381"/>
        <end position="384"/>
    </location>
</feature>
<feature type="strand" evidence="3">
    <location>
        <begin position="387"/>
        <end position="390"/>
    </location>
</feature>
<feature type="helix" evidence="3">
    <location>
        <begin position="392"/>
        <end position="411"/>
    </location>
</feature>
<accession>P0AGM8</accession>
<accession>P33780</accession>
<evidence type="ECO:0000250" key="1">
    <source>
        <dbReference type="UniProtKB" id="P0AGM7"/>
    </source>
</evidence>
<evidence type="ECO:0000305" key="2"/>
<evidence type="ECO:0007829" key="3">
    <source>
        <dbReference type="PDB" id="5XLS"/>
    </source>
</evidence>
<dbReference type="EMBL" id="AE005174">
    <property type="protein sequence ID" value="AAG57607.1"/>
    <property type="molecule type" value="Genomic_DNA"/>
</dbReference>
<dbReference type="EMBL" id="BA000007">
    <property type="protein sequence ID" value="BAB36782.1"/>
    <property type="molecule type" value="Genomic_DNA"/>
</dbReference>
<dbReference type="PIR" id="C85893">
    <property type="entry name" value="C85893"/>
</dbReference>
<dbReference type="PIR" id="G91048">
    <property type="entry name" value="G91048"/>
</dbReference>
<dbReference type="RefSeq" id="NP_311386.1">
    <property type="nucleotide sequence ID" value="NC_002695.1"/>
</dbReference>
<dbReference type="RefSeq" id="WP_000198328.1">
    <property type="nucleotide sequence ID" value="NZ_VOAI01000001.1"/>
</dbReference>
<dbReference type="PDB" id="5XLS">
    <property type="method" value="X-ray"/>
    <property type="resolution" value="2.50 A"/>
    <property type="chains" value="A=1-429"/>
</dbReference>
<dbReference type="PDBsum" id="5XLS"/>
<dbReference type="SMR" id="P0AGM8"/>
<dbReference type="STRING" id="155864.Z3760"/>
<dbReference type="GeneID" id="915224"/>
<dbReference type="GeneID" id="93774639"/>
<dbReference type="KEGG" id="ece:Z3760"/>
<dbReference type="KEGG" id="ecs:ECs_3359"/>
<dbReference type="PATRIC" id="fig|386585.9.peg.3508"/>
<dbReference type="eggNOG" id="COG2233">
    <property type="taxonomic scope" value="Bacteria"/>
</dbReference>
<dbReference type="HOGENOM" id="CLU_017959_1_2_6"/>
<dbReference type="OMA" id="FMEHIGD"/>
<dbReference type="Proteomes" id="UP000000558">
    <property type="component" value="Chromosome"/>
</dbReference>
<dbReference type="Proteomes" id="UP000002519">
    <property type="component" value="Chromosome"/>
</dbReference>
<dbReference type="GO" id="GO:0005886">
    <property type="term" value="C:plasma membrane"/>
    <property type="evidence" value="ECO:0007669"/>
    <property type="project" value="UniProtKB-SubCell"/>
</dbReference>
<dbReference type="GO" id="GO:0015293">
    <property type="term" value="F:symporter activity"/>
    <property type="evidence" value="ECO:0007669"/>
    <property type="project" value="UniProtKB-KW"/>
</dbReference>
<dbReference type="GO" id="GO:0042907">
    <property type="term" value="F:xanthine transmembrane transporter activity"/>
    <property type="evidence" value="ECO:0007669"/>
    <property type="project" value="TreeGrafter"/>
</dbReference>
<dbReference type="InterPro" id="IPR006043">
    <property type="entry name" value="NCS2"/>
</dbReference>
<dbReference type="InterPro" id="IPR006042">
    <property type="entry name" value="Xan_ur_permease"/>
</dbReference>
<dbReference type="NCBIfam" id="TIGR00801">
    <property type="entry name" value="ncs2"/>
    <property type="match status" value="1"/>
</dbReference>
<dbReference type="NCBIfam" id="NF007995">
    <property type="entry name" value="PRK10720.1"/>
    <property type="match status" value="1"/>
</dbReference>
<dbReference type="PANTHER" id="PTHR42810">
    <property type="entry name" value="PURINE PERMEASE C1399.01C-RELATED"/>
    <property type="match status" value="1"/>
</dbReference>
<dbReference type="PANTHER" id="PTHR42810:SF4">
    <property type="entry name" value="URIC ACID TRANSPORTER UACT"/>
    <property type="match status" value="1"/>
</dbReference>
<dbReference type="Pfam" id="PF00860">
    <property type="entry name" value="Xan_ur_permease"/>
    <property type="match status" value="1"/>
</dbReference>
<dbReference type="PROSITE" id="PS01116">
    <property type="entry name" value="XANTH_URACIL_PERMASE"/>
    <property type="match status" value="1"/>
</dbReference>
<sequence>MTRRAIGVSERPPLLQTIPLSLQHLFAMFGATVLVPVLFHINPATVLLFNGIGTLLYLFICKGKIPAYLGSSFAFISPVLLLLPLGYEVALGGFIMCGVLFCLVSFIVKKAGTGWLDVLFPPAAMGAIVAVIGLELAGVAAGMAGLLPAEGQTPDSKTIIISITTLAVTVLGSVLFRGFLAIIPILIGVLVGYALSFAMGIVDTTPIINAHWFALPTLYTPRFEWFAILTILPAALVVIAEHVGHLVVTANIVKKDLLRDPGLHRSMFANGLSTVISGFFGSTPNTTYGENIGVMAITRVYSTWVIGGAAIFAILLSCVGKLAAAIQMIPLPVMGGVSLLLYGVIGASGIRVLIESKVDYNKAQNLILTSVILIIGVSGAKVNIGAAELKGMALATIVGIGLSLIFKLISVLRPEEVVLDAEDADITDK</sequence>
<protein>
    <recommendedName>
        <fullName evidence="1">Uracil permease</fullName>
    </recommendedName>
    <alternativeName>
        <fullName evidence="1">Uracil transporter</fullName>
    </alternativeName>
    <alternativeName>
        <fullName evidence="1">Uracil/H(+) symporter UraA</fullName>
    </alternativeName>
</protein>
<comment type="function">
    <text evidence="1">Transport of uracil in the cell.</text>
</comment>
<comment type="catalytic activity">
    <reaction evidence="1">
        <text>uracil(in) + H(+)(in) = uracil(out) + H(+)(out)</text>
        <dbReference type="Rhea" id="RHEA:29239"/>
        <dbReference type="ChEBI" id="CHEBI:15378"/>
        <dbReference type="ChEBI" id="CHEBI:17568"/>
    </reaction>
    <physiologicalReaction direction="right-to-left" evidence="1">
        <dbReference type="Rhea" id="RHEA:29241"/>
    </physiologicalReaction>
</comment>
<comment type="subcellular location">
    <subcellularLocation>
        <location evidence="1">Cell inner membrane</location>
        <topology evidence="1">Multi-pass membrane protein</topology>
    </subcellularLocation>
</comment>
<comment type="similarity">
    <text evidence="2">Belongs to the nucleobase:cation symporter-2 (NCS2) (TC 2.A.40) family.</text>
</comment>
<reference key="1">
    <citation type="journal article" date="2001" name="Nature">
        <title>Genome sequence of enterohaemorrhagic Escherichia coli O157:H7.</title>
        <authorList>
            <person name="Perna N.T."/>
            <person name="Plunkett G. III"/>
            <person name="Burland V."/>
            <person name="Mau B."/>
            <person name="Glasner J.D."/>
            <person name="Rose D.J."/>
            <person name="Mayhew G.F."/>
            <person name="Evans P.S."/>
            <person name="Gregor J."/>
            <person name="Kirkpatrick H.A."/>
            <person name="Posfai G."/>
            <person name="Hackett J."/>
            <person name="Klink S."/>
            <person name="Boutin A."/>
            <person name="Shao Y."/>
            <person name="Miller L."/>
            <person name="Grotbeck E.J."/>
            <person name="Davis N.W."/>
            <person name="Lim A."/>
            <person name="Dimalanta E.T."/>
            <person name="Potamousis K."/>
            <person name="Apodaca J."/>
            <person name="Anantharaman T.S."/>
            <person name="Lin J."/>
            <person name="Yen G."/>
            <person name="Schwartz D.C."/>
            <person name="Welch R.A."/>
            <person name="Blattner F.R."/>
        </authorList>
    </citation>
    <scope>NUCLEOTIDE SEQUENCE [LARGE SCALE GENOMIC DNA]</scope>
    <source>
        <strain>O157:H7 / EDL933 / ATCC 700927 / EHEC</strain>
    </source>
</reference>
<reference key="2">
    <citation type="journal article" date="2001" name="DNA Res.">
        <title>Complete genome sequence of enterohemorrhagic Escherichia coli O157:H7 and genomic comparison with a laboratory strain K-12.</title>
        <authorList>
            <person name="Hayashi T."/>
            <person name="Makino K."/>
            <person name="Ohnishi M."/>
            <person name="Kurokawa K."/>
            <person name="Ishii K."/>
            <person name="Yokoyama K."/>
            <person name="Han C.-G."/>
            <person name="Ohtsubo E."/>
            <person name="Nakayama K."/>
            <person name="Murata T."/>
            <person name="Tanaka M."/>
            <person name="Tobe T."/>
            <person name="Iida T."/>
            <person name="Takami H."/>
            <person name="Honda T."/>
            <person name="Sasakawa C."/>
            <person name="Ogasawara N."/>
            <person name="Yasunaga T."/>
            <person name="Kuhara S."/>
            <person name="Shiba T."/>
            <person name="Hattori M."/>
            <person name="Shinagawa H."/>
        </authorList>
    </citation>
    <scope>NUCLEOTIDE SEQUENCE [LARGE SCALE GENOMIC DNA]</scope>
    <source>
        <strain>O157:H7 / Sakai / RIMD 0509952 / EHEC</strain>
    </source>
</reference>
<gene>
    <name type="primary">uraA</name>
    <name type="ordered locus">Z3760</name>
    <name type="ordered locus">ECs3359</name>
</gene>
<name>URAA_ECO57</name>
<organism>
    <name type="scientific">Escherichia coli O157:H7</name>
    <dbReference type="NCBI Taxonomy" id="83334"/>
    <lineage>
        <taxon>Bacteria</taxon>
        <taxon>Pseudomonadati</taxon>
        <taxon>Pseudomonadota</taxon>
        <taxon>Gammaproteobacteria</taxon>
        <taxon>Enterobacterales</taxon>
        <taxon>Enterobacteriaceae</taxon>
        <taxon>Escherichia</taxon>
    </lineage>
</organism>